<gene>
    <name evidence="1" type="primary">tmk</name>
    <name type="ordered locus">PputW619_1530</name>
</gene>
<protein>
    <recommendedName>
        <fullName evidence="1">Thymidylate kinase</fullName>
        <ecNumber evidence="1">2.7.4.9</ecNumber>
    </recommendedName>
    <alternativeName>
        <fullName evidence="1">dTMP kinase</fullName>
    </alternativeName>
</protein>
<organism>
    <name type="scientific">Pseudomonas putida (strain W619)</name>
    <dbReference type="NCBI Taxonomy" id="390235"/>
    <lineage>
        <taxon>Bacteria</taxon>
        <taxon>Pseudomonadati</taxon>
        <taxon>Pseudomonadota</taxon>
        <taxon>Gammaproteobacteria</taxon>
        <taxon>Pseudomonadales</taxon>
        <taxon>Pseudomonadaceae</taxon>
        <taxon>Pseudomonas</taxon>
    </lineage>
</organism>
<accession>B1J4Z5</accession>
<sequence>MFITLEGPEGAGKSTNRDYLAARLREQGLDVVLTREPGGTPLAEKVRELLLAPSDEVMAADTELLLVFAARAQHLAQVIRPALARGAVVLCDRFTDATYAYQGGGRGLSVERIAALEQFVQGELRPDLTLVFDLPVEVGLARAAARGRLDRFEQEGQAFFEAVRQAYLQRARREPQRYDLLDAAQPLEAVQRAIDALLPGILERCRG</sequence>
<keyword id="KW-0067">ATP-binding</keyword>
<keyword id="KW-0418">Kinase</keyword>
<keyword id="KW-0545">Nucleotide biosynthesis</keyword>
<keyword id="KW-0547">Nucleotide-binding</keyword>
<keyword id="KW-0808">Transferase</keyword>
<feature type="chain" id="PRO_1000203625" description="Thymidylate kinase">
    <location>
        <begin position="1"/>
        <end position="207"/>
    </location>
</feature>
<feature type="binding site" evidence="1">
    <location>
        <begin position="7"/>
        <end position="14"/>
    </location>
    <ligand>
        <name>ATP</name>
        <dbReference type="ChEBI" id="CHEBI:30616"/>
    </ligand>
</feature>
<evidence type="ECO:0000255" key="1">
    <source>
        <dbReference type="HAMAP-Rule" id="MF_00165"/>
    </source>
</evidence>
<name>KTHY_PSEPW</name>
<reference key="1">
    <citation type="submission" date="2008-02" db="EMBL/GenBank/DDBJ databases">
        <title>Complete sequence of Pseudomonas putida W619.</title>
        <authorList>
            <person name="Copeland A."/>
            <person name="Lucas S."/>
            <person name="Lapidus A."/>
            <person name="Barry K."/>
            <person name="Detter J.C."/>
            <person name="Glavina del Rio T."/>
            <person name="Dalin E."/>
            <person name="Tice H."/>
            <person name="Pitluck S."/>
            <person name="Chain P."/>
            <person name="Malfatti S."/>
            <person name="Shin M."/>
            <person name="Vergez L."/>
            <person name="Schmutz J."/>
            <person name="Larimer F."/>
            <person name="Land M."/>
            <person name="Hauser L."/>
            <person name="Kyrpides N."/>
            <person name="Kim E."/>
            <person name="Taghavi S."/>
            <person name="Vangronsveld D."/>
            <person name="van der Lelie D."/>
            <person name="Richardson P."/>
        </authorList>
    </citation>
    <scope>NUCLEOTIDE SEQUENCE [LARGE SCALE GENOMIC DNA]</scope>
    <source>
        <strain>W619</strain>
    </source>
</reference>
<proteinExistence type="inferred from homology"/>
<comment type="function">
    <text evidence="1">Phosphorylation of dTMP to form dTDP in both de novo and salvage pathways of dTTP synthesis.</text>
</comment>
<comment type="catalytic activity">
    <reaction evidence="1">
        <text>dTMP + ATP = dTDP + ADP</text>
        <dbReference type="Rhea" id="RHEA:13517"/>
        <dbReference type="ChEBI" id="CHEBI:30616"/>
        <dbReference type="ChEBI" id="CHEBI:58369"/>
        <dbReference type="ChEBI" id="CHEBI:63528"/>
        <dbReference type="ChEBI" id="CHEBI:456216"/>
        <dbReference type="EC" id="2.7.4.9"/>
    </reaction>
</comment>
<comment type="similarity">
    <text evidence="1">Belongs to the thymidylate kinase family.</text>
</comment>
<dbReference type="EC" id="2.7.4.9" evidence="1"/>
<dbReference type="EMBL" id="CP000949">
    <property type="protein sequence ID" value="ACA72035.1"/>
    <property type="molecule type" value="Genomic_DNA"/>
</dbReference>
<dbReference type="SMR" id="B1J4Z5"/>
<dbReference type="STRING" id="390235.PputW619_1530"/>
<dbReference type="KEGG" id="ppw:PputW619_1530"/>
<dbReference type="eggNOG" id="COG0125">
    <property type="taxonomic scope" value="Bacteria"/>
</dbReference>
<dbReference type="HOGENOM" id="CLU_049131_0_2_6"/>
<dbReference type="GO" id="GO:0005829">
    <property type="term" value="C:cytosol"/>
    <property type="evidence" value="ECO:0007669"/>
    <property type="project" value="TreeGrafter"/>
</dbReference>
<dbReference type="GO" id="GO:0005524">
    <property type="term" value="F:ATP binding"/>
    <property type="evidence" value="ECO:0007669"/>
    <property type="project" value="UniProtKB-UniRule"/>
</dbReference>
<dbReference type="GO" id="GO:0004798">
    <property type="term" value="F:dTMP kinase activity"/>
    <property type="evidence" value="ECO:0007669"/>
    <property type="project" value="UniProtKB-UniRule"/>
</dbReference>
<dbReference type="GO" id="GO:0006233">
    <property type="term" value="P:dTDP biosynthetic process"/>
    <property type="evidence" value="ECO:0007669"/>
    <property type="project" value="InterPro"/>
</dbReference>
<dbReference type="GO" id="GO:0006235">
    <property type="term" value="P:dTTP biosynthetic process"/>
    <property type="evidence" value="ECO:0007669"/>
    <property type="project" value="UniProtKB-UniRule"/>
</dbReference>
<dbReference type="GO" id="GO:0006227">
    <property type="term" value="P:dUDP biosynthetic process"/>
    <property type="evidence" value="ECO:0007669"/>
    <property type="project" value="TreeGrafter"/>
</dbReference>
<dbReference type="CDD" id="cd01672">
    <property type="entry name" value="TMPK"/>
    <property type="match status" value="1"/>
</dbReference>
<dbReference type="FunFam" id="3.40.50.300:FF:000225">
    <property type="entry name" value="Thymidylate kinase"/>
    <property type="match status" value="1"/>
</dbReference>
<dbReference type="Gene3D" id="3.40.50.300">
    <property type="entry name" value="P-loop containing nucleotide triphosphate hydrolases"/>
    <property type="match status" value="1"/>
</dbReference>
<dbReference type="HAMAP" id="MF_00165">
    <property type="entry name" value="Thymidylate_kinase"/>
    <property type="match status" value="1"/>
</dbReference>
<dbReference type="InterPro" id="IPR027417">
    <property type="entry name" value="P-loop_NTPase"/>
</dbReference>
<dbReference type="InterPro" id="IPR039430">
    <property type="entry name" value="Thymidylate_kin-like_dom"/>
</dbReference>
<dbReference type="InterPro" id="IPR018094">
    <property type="entry name" value="Thymidylate_kinase"/>
</dbReference>
<dbReference type="NCBIfam" id="TIGR00041">
    <property type="entry name" value="DTMP_kinase"/>
    <property type="match status" value="1"/>
</dbReference>
<dbReference type="PANTHER" id="PTHR10344">
    <property type="entry name" value="THYMIDYLATE KINASE"/>
    <property type="match status" value="1"/>
</dbReference>
<dbReference type="PANTHER" id="PTHR10344:SF4">
    <property type="entry name" value="UMP-CMP KINASE 2, MITOCHONDRIAL"/>
    <property type="match status" value="1"/>
</dbReference>
<dbReference type="Pfam" id="PF02223">
    <property type="entry name" value="Thymidylate_kin"/>
    <property type="match status" value="1"/>
</dbReference>
<dbReference type="SUPFAM" id="SSF52540">
    <property type="entry name" value="P-loop containing nucleoside triphosphate hydrolases"/>
    <property type="match status" value="1"/>
</dbReference>